<name>RS17_EXIS2</name>
<feature type="chain" id="PRO_1000143259" description="Small ribosomal subunit protein uS17">
    <location>
        <begin position="1"/>
        <end position="87"/>
    </location>
</feature>
<gene>
    <name evidence="1" type="primary">rpsQ</name>
    <name type="ordered locus">Exig_0105</name>
</gene>
<evidence type="ECO:0000255" key="1">
    <source>
        <dbReference type="HAMAP-Rule" id="MF_01345"/>
    </source>
</evidence>
<evidence type="ECO:0000305" key="2"/>
<keyword id="KW-1185">Reference proteome</keyword>
<keyword id="KW-0687">Ribonucleoprotein</keyword>
<keyword id="KW-0689">Ribosomal protein</keyword>
<keyword id="KW-0694">RNA-binding</keyword>
<keyword id="KW-0699">rRNA-binding</keyword>
<sequence>MERTNNRKVLTGRVVSDKMDKTIVVTVETKVKHKLYGKRVNYSKKYKTHDENNTAKIGDVVRIQETRPLSKDKRFRLVEVVEKAVII</sequence>
<organism>
    <name type="scientific">Exiguobacterium sibiricum (strain DSM 17290 / CCUG 55495 / CIP 109462 / JCM 13490 / 255-15)</name>
    <dbReference type="NCBI Taxonomy" id="262543"/>
    <lineage>
        <taxon>Bacteria</taxon>
        <taxon>Bacillati</taxon>
        <taxon>Bacillota</taxon>
        <taxon>Bacilli</taxon>
        <taxon>Bacillales</taxon>
        <taxon>Bacillales Family XII. Incertae Sedis</taxon>
        <taxon>Exiguobacterium</taxon>
    </lineage>
</organism>
<dbReference type="EMBL" id="CP001022">
    <property type="protein sequence ID" value="ACB59592.1"/>
    <property type="molecule type" value="Genomic_DNA"/>
</dbReference>
<dbReference type="RefSeq" id="WP_012369018.1">
    <property type="nucleotide sequence ID" value="NC_010556.1"/>
</dbReference>
<dbReference type="SMR" id="B1YGV9"/>
<dbReference type="STRING" id="262543.Exig_0105"/>
<dbReference type="KEGG" id="esi:Exig_0105"/>
<dbReference type="eggNOG" id="COG0186">
    <property type="taxonomic scope" value="Bacteria"/>
</dbReference>
<dbReference type="HOGENOM" id="CLU_073626_1_0_9"/>
<dbReference type="OrthoDB" id="9811714at2"/>
<dbReference type="Proteomes" id="UP000001681">
    <property type="component" value="Chromosome"/>
</dbReference>
<dbReference type="GO" id="GO:0022627">
    <property type="term" value="C:cytosolic small ribosomal subunit"/>
    <property type="evidence" value="ECO:0007669"/>
    <property type="project" value="TreeGrafter"/>
</dbReference>
<dbReference type="GO" id="GO:0019843">
    <property type="term" value="F:rRNA binding"/>
    <property type="evidence" value="ECO:0007669"/>
    <property type="project" value="UniProtKB-UniRule"/>
</dbReference>
<dbReference type="GO" id="GO:0003735">
    <property type="term" value="F:structural constituent of ribosome"/>
    <property type="evidence" value="ECO:0007669"/>
    <property type="project" value="InterPro"/>
</dbReference>
<dbReference type="GO" id="GO:0006412">
    <property type="term" value="P:translation"/>
    <property type="evidence" value="ECO:0007669"/>
    <property type="project" value="UniProtKB-UniRule"/>
</dbReference>
<dbReference type="CDD" id="cd00364">
    <property type="entry name" value="Ribosomal_uS17"/>
    <property type="match status" value="1"/>
</dbReference>
<dbReference type="FunFam" id="2.40.50.140:FF:000026">
    <property type="entry name" value="30S ribosomal protein S17"/>
    <property type="match status" value="1"/>
</dbReference>
<dbReference type="Gene3D" id="2.40.50.140">
    <property type="entry name" value="Nucleic acid-binding proteins"/>
    <property type="match status" value="1"/>
</dbReference>
<dbReference type="HAMAP" id="MF_01345_B">
    <property type="entry name" value="Ribosomal_uS17_B"/>
    <property type="match status" value="1"/>
</dbReference>
<dbReference type="InterPro" id="IPR012340">
    <property type="entry name" value="NA-bd_OB-fold"/>
</dbReference>
<dbReference type="InterPro" id="IPR000266">
    <property type="entry name" value="Ribosomal_uS17"/>
</dbReference>
<dbReference type="InterPro" id="IPR019984">
    <property type="entry name" value="Ribosomal_uS17_bact/chlr"/>
</dbReference>
<dbReference type="InterPro" id="IPR019979">
    <property type="entry name" value="Ribosomal_uS17_CS"/>
</dbReference>
<dbReference type="NCBIfam" id="NF004123">
    <property type="entry name" value="PRK05610.1"/>
    <property type="match status" value="1"/>
</dbReference>
<dbReference type="NCBIfam" id="TIGR03635">
    <property type="entry name" value="uS17_bact"/>
    <property type="match status" value="1"/>
</dbReference>
<dbReference type="PANTHER" id="PTHR10744">
    <property type="entry name" value="40S RIBOSOMAL PROTEIN S11 FAMILY MEMBER"/>
    <property type="match status" value="1"/>
</dbReference>
<dbReference type="PANTHER" id="PTHR10744:SF1">
    <property type="entry name" value="SMALL RIBOSOMAL SUBUNIT PROTEIN US17M"/>
    <property type="match status" value="1"/>
</dbReference>
<dbReference type="Pfam" id="PF00366">
    <property type="entry name" value="Ribosomal_S17"/>
    <property type="match status" value="1"/>
</dbReference>
<dbReference type="PRINTS" id="PR00973">
    <property type="entry name" value="RIBOSOMALS17"/>
</dbReference>
<dbReference type="SUPFAM" id="SSF50249">
    <property type="entry name" value="Nucleic acid-binding proteins"/>
    <property type="match status" value="1"/>
</dbReference>
<dbReference type="PROSITE" id="PS00056">
    <property type="entry name" value="RIBOSOMAL_S17"/>
    <property type="match status" value="1"/>
</dbReference>
<reference key="1">
    <citation type="submission" date="2008-04" db="EMBL/GenBank/DDBJ databases">
        <title>Complete sequence of chromosome of Exiguobacterium sibiricum 255-15.</title>
        <authorList>
            <consortium name="US DOE Joint Genome Institute"/>
            <person name="Copeland A."/>
            <person name="Lucas S."/>
            <person name="Lapidus A."/>
            <person name="Glavina del Rio T."/>
            <person name="Dalin E."/>
            <person name="Tice H."/>
            <person name="Bruce D."/>
            <person name="Goodwin L."/>
            <person name="Pitluck S."/>
            <person name="Kiss H."/>
            <person name="Chertkov O."/>
            <person name="Monk C."/>
            <person name="Brettin T."/>
            <person name="Detter J.C."/>
            <person name="Han C."/>
            <person name="Kuske C.R."/>
            <person name="Schmutz J."/>
            <person name="Larimer F."/>
            <person name="Land M."/>
            <person name="Hauser L."/>
            <person name="Kyrpides N."/>
            <person name="Mikhailova N."/>
            <person name="Vishnivetskaya T."/>
            <person name="Rodrigues D.F."/>
            <person name="Gilichinsky D."/>
            <person name="Tiedje J."/>
            <person name="Richardson P."/>
        </authorList>
    </citation>
    <scope>NUCLEOTIDE SEQUENCE [LARGE SCALE GENOMIC DNA]</scope>
    <source>
        <strain>DSM 17290 / CCUG 55495 / CIP 109462 / JCM 13490 / 255-15</strain>
    </source>
</reference>
<proteinExistence type="inferred from homology"/>
<accession>B1YGV9</accession>
<protein>
    <recommendedName>
        <fullName evidence="1">Small ribosomal subunit protein uS17</fullName>
    </recommendedName>
    <alternativeName>
        <fullName evidence="2">30S ribosomal protein S17</fullName>
    </alternativeName>
</protein>
<comment type="function">
    <text evidence="1">One of the primary rRNA binding proteins, it binds specifically to the 5'-end of 16S ribosomal RNA.</text>
</comment>
<comment type="subunit">
    <text evidence="1">Part of the 30S ribosomal subunit.</text>
</comment>
<comment type="similarity">
    <text evidence="1">Belongs to the universal ribosomal protein uS17 family.</text>
</comment>